<gene>
    <name evidence="1" type="primary">nhaB</name>
    <name type="ordered locus">SeD_A1512</name>
</gene>
<accession>B5FTM8</accession>
<reference key="1">
    <citation type="journal article" date="2011" name="J. Bacteriol.">
        <title>Comparative genomics of 28 Salmonella enterica isolates: evidence for CRISPR-mediated adaptive sublineage evolution.</title>
        <authorList>
            <person name="Fricke W.F."/>
            <person name="Mammel M.K."/>
            <person name="McDermott P.F."/>
            <person name="Tartera C."/>
            <person name="White D.G."/>
            <person name="Leclerc J.E."/>
            <person name="Ravel J."/>
            <person name="Cebula T.A."/>
        </authorList>
    </citation>
    <scope>NUCLEOTIDE SEQUENCE [LARGE SCALE GENOMIC DNA]</scope>
    <source>
        <strain>CT_02021853</strain>
    </source>
</reference>
<organism>
    <name type="scientific">Salmonella dublin (strain CT_02021853)</name>
    <dbReference type="NCBI Taxonomy" id="439851"/>
    <lineage>
        <taxon>Bacteria</taxon>
        <taxon>Pseudomonadati</taxon>
        <taxon>Pseudomonadota</taxon>
        <taxon>Gammaproteobacteria</taxon>
        <taxon>Enterobacterales</taxon>
        <taxon>Enterobacteriaceae</taxon>
        <taxon>Salmonella</taxon>
    </lineage>
</organism>
<protein>
    <recommendedName>
        <fullName evidence="1">Na(+)/H(+) antiporter NhaB</fullName>
    </recommendedName>
    <alternativeName>
        <fullName evidence="1">Sodium/proton antiporter NhaB</fullName>
    </alternativeName>
</protein>
<evidence type="ECO:0000255" key="1">
    <source>
        <dbReference type="HAMAP-Rule" id="MF_01599"/>
    </source>
</evidence>
<dbReference type="EMBL" id="CP001144">
    <property type="protein sequence ID" value="ACH77836.1"/>
    <property type="molecule type" value="Genomic_DNA"/>
</dbReference>
<dbReference type="RefSeq" id="WP_000406438.1">
    <property type="nucleotide sequence ID" value="NC_011205.1"/>
</dbReference>
<dbReference type="SMR" id="B5FTM8"/>
<dbReference type="KEGG" id="sed:SeD_A1512"/>
<dbReference type="HOGENOM" id="CLU_041110_0_0_6"/>
<dbReference type="Proteomes" id="UP000008322">
    <property type="component" value="Chromosome"/>
</dbReference>
<dbReference type="GO" id="GO:0005886">
    <property type="term" value="C:plasma membrane"/>
    <property type="evidence" value="ECO:0007669"/>
    <property type="project" value="UniProtKB-SubCell"/>
</dbReference>
<dbReference type="GO" id="GO:0015385">
    <property type="term" value="F:sodium:proton antiporter activity"/>
    <property type="evidence" value="ECO:0007669"/>
    <property type="project" value="InterPro"/>
</dbReference>
<dbReference type="HAMAP" id="MF_01599">
    <property type="entry name" value="NhaB"/>
    <property type="match status" value="1"/>
</dbReference>
<dbReference type="InterPro" id="IPR004671">
    <property type="entry name" value="Na+/H+_antiporter_NhaB"/>
</dbReference>
<dbReference type="NCBIfam" id="TIGR00774">
    <property type="entry name" value="NhaB"/>
    <property type="match status" value="1"/>
</dbReference>
<dbReference type="NCBIfam" id="NF007093">
    <property type="entry name" value="PRK09547.1"/>
    <property type="match status" value="1"/>
</dbReference>
<dbReference type="PANTHER" id="PTHR43302:SF1">
    <property type="entry name" value="NA(+)_H(+) ANTIPORTER NHAB"/>
    <property type="match status" value="1"/>
</dbReference>
<dbReference type="PANTHER" id="PTHR43302">
    <property type="entry name" value="TRANSPORTER ARSB-RELATED"/>
    <property type="match status" value="1"/>
</dbReference>
<dbReference type="Pfam" id="PF06450">
    <property type="entry name" value="NhaB"/>
    <property type="match status" value="1"/>
</dbReference>
<keyword id="KW-0050">Antiport</keyword>
<keyword id="KW-0997">Cell inner membrane</keyword>
<keyword id="KW-1003">Cell membrane</keyword>
<keyword id="KW-0406">Ion transport</keyword>
<keyword id="KW-0472">Membrane</keyword>
<keyword id="KW-0915">Sodium</keyword>
<keyword id="KW-0739">Sodium transport</keyword>
<keyword id="KW-0812">Transmembrane</keyword>
<keyword id="KW-1133">Transmembrane helix</keyword>
<keyword id="KW-0813">Transport</keyword>
<sequence length="514" mass="56526">MEISWGRAMWRNFLGQSPDWYKLALLVFLIVNPFIFLANPFIAGWLLVAEFIFTLAMALKCYPLLPGGLLAIEAVIIGMTSAAHVREEVAANLEVLLLLMFMVAGIYFMKQLLLFIFTRLLLSIRSKMVLSLAFCVAAAFLSAFLDALTVVAVVISVAVGFYGIYHRVASSRGEENDMLDDSHIDPHYKTVLEQFRGFLRSLMMHAGVGTALGGVMTMVGEPQNLIIAKAAGWHFGDFFLRMSPVTVPVLVCGLLTCMLVEKMRWFGYGETLPEKVRDVLQQFDDQSRKKRTRQDKIKLIVQAVIGVWLVTALALHLAEVGLIGLSVIILATALTGVTDEHAIGKAFTESLPFTALLTVFFSIVAVIIDQHLFAPIIQFVLQASEHAQLTLFYLFNGLLSSISDNVFVGTIYINEAKAAMENGAISLKQFELLAVAINTGTNLPSVATPNGQAAFLFLLTSALAPLIRLSYGRMVWMALPYTIVLTLIGLLCVEFTLAPATEWMTQAGWLATLS</sequence>
<feature type="chain" id="PRO_1000191538" description="Na(+)/H(+) antiporter NhaB">
    <location>
        <begin position="1"/>
        <end position="514"/>
    </location>
</feature>
<feature type="transmembrane region" description="Helical" evidence="1">
    <location>
        <begin position="23"/>
        <end position="43"/>
    </location>
</feature>
<feature type="transmembrane region" description="Helical" evidence="1">
    <location>
        <begin position="63"/>
        <end position="83"/>
    </location>
</feature>
<feature type="transmembrane region" description="Helical" evidence="1">
    <location>
        <begin position="97"/>
        <end position="117"/>
    </location>
</feature>
<feature type="transmembrane region" description="Helical" evidence="1">
    <location>
        <begin position="120"/>
        <end position="140"/>
    </location>
</feature>
<feature type="transmembrane region" description="Helical" evidence="1">
    <location>
        <begin position="144"/>
        <end position="164"/>
    </location>
</feature>
<feature type="transmembrane region" description="Helical" evidence="1">
    <location>
        <begin position="202"/>
        <end position="222"/>
    </location>
</feature>
<feature type="transmembrane region" description="Helical" evidence="1">
    <location>
        <begin position="238"/>
        <end position="258"/>
    </location>
</feature>
<feature type="transmembrane region" description="Helical" evidence="1">
    <location>
        <begin position="303"/>
        <end position="323"/>
    </location>
</feature>
<feature type="transmembrane region" description="Helical" evidence="1">
    <location>
        <begin position="357"/>
        <end position="377"/>
    </location>
</feature>
<feature type="transmembrane region" description="Helical" evidence="1">
    <location>
        <begin position="391"/>
        <end position="411"/>
    </location>
</feature>
<feature type="transmembrane region" description="Helical" evidence="1">
    <location>
        <begin position="447"/>
        <end position="467"/>
    </location>
</feature>
<feature type="transmembrane region" description="Helical" evidence="1">
    <location>
        <begin position="475"/>
        <end position="495"/>
    </location>
</feature>
<name>NHAB_SALDC</name>
<comment type="function">
    <text evidence="1">Na(+)/H(+) antiporter that extrudes sodium in exchange for external protons.</text>
</comment>
<comment type="catalytic activity">
    <reaction evidence="1">
        <text>2 Na(+)(in) + 3 H(+)(out) = 2 Na(+)(out) + 3 H(+)(in)</text>
        <dbReference type="Rhea" id="RHEA:29247"/>
        <dbReference type="ChEBI" id="CHEBI:15378"/>
        <dbReference type="ChEBI" id="CHEBI:29101"/>
    </reaction>
    <physiologicalReaction direction="left-to-right" evidence="1">
        <dbReference type="Rhea" id="RHEA:29248"/>
    </physiologicalReaction>
</comment>
<comment type="subcellular location">
    <subcellularLocation>
        <location evidence="1">Cell inner membrane</location>
        <topology evidence="1">Multi-pass membrane protein</topology>
    </subcellularLocation>
</comment>
<comment type="similarity">
    <text evidence="1">Belongs to the NhaB Na(+)/H(+) (TC 2.A.34) antiporter family.</text>
</comment>
<proteinExistence type="inferred from homology"/>